<feature type="chain" id="PRO_0000052998" description="Hemoglobin subunit beta">
    <location>
        <begin position="1"/>
        <end position="146"/>
    </location>
</feature>
<feature type="domain" description="Globin" evidence="3">
    <location>
        <begin position="2"/>
        <end position="146"/>
    </location>
</feature>
<feature type="binding site" description="distal binding residue">
    <location>
        <position position="63"/>
    </location>
    <ligand>
        <name>heme b</name>
        <dbReference type="ChEBI" id="CHEBI:60344"/>
    </ligand>
    <ligandPart>
        <name>Fe</name>
        <dbReference type="ChEBI" id="CHEBI:18248"/>
    </ligandPart>
</feature>
<feature type="binding site" description="proximal binding residue">
    <location>
        <position position="92"/>
    </location>
    <ligand>
        <name>heme b</name>
        <dbReference type="ChEBI" id="CHEBI:60344"/>
    </ligand>
    <ligandPart>
        <name>Fe</name>
        <dbReference type="ChEBI" id="CHEBI:18248"/>
    </ligandPart>
</feature>
<feature type="modified residue" description="N-acetylvaline" evidence="1">
    <location>
        <position position="1"/>
    </location>
</feature>
<feature type="modified residue" description="Phosphoserine" evidence="2">
    <location>
        <position position="44"/>
    </location>
</feature>
<feature type="modified residue" description="N6-acetyllysine" evidence="2">
    <location>
        <position position="59"/>
    </location>
</feature>
<feature type="modified residue" description="N6-acetyllysine" evidence="2">
    <location>
        <position position="82"/>
    </location>
</feature>
<feature type="modified residue" description="S-nitrosocysteine" evidence="2">
    <location>
        <position position="93"/>
    </location>
</feature>
<feature type="modified residue" description="N6-acetyllysine" evidence="2">
    <location>
        <position position="144"/>
    </location>
</feature>
<sequence length="146" mass="16006">VHLTGEEKSTVSALWGKVNVEEIGGEALGRLLVVYPWTQRFFDSFGDLSSPSAVFGNAKVKSHGKKVLDSFSNGMQHLDNLKGTFAKLSELHCDKLHVDPENFRLLGNVLVVVLARNFGKEFTPQVQAAYQKVVAGVATALAHKYH</sequence>
<proteinExistence type="evidence at protein level"/>
<dbReference type="PIR" id="B26640">
    <property type="entry name" value="B26640"/>
</dbReference>
<dbReference type="SMR" id="P09840"/>
<dbReference type="GO" id="GO:0072562">
    <property type="term" value="C:blood microparticle"/>
    <property type="evidence" value="ECO:0007669"/>
    <property type="project" value="TreeGrafter"/>
</dbReference>
<dbReference type="GO" id="GO:0031838">
    <property type="term" value="C:haptoglobin-hemoglobin complex"/>
    <property type="evidence" value="ECO:0007669"/>
    <property type="project" value="TreeGrafter"/>
</dbReference>
<dbReference type="GO" id="GO:0005833">
    <property type="term" value="C:hemoglobin complex"/>
    <property type="evidence" value="ECO:0007669"/>
    <property type="project" value="InterPro"/>
</dbReference>
<dbReference type="GO" id="GO:0031720">
    <property type="term" value="F:haptoglobin binding"/>
    <property type="evidence" value="ECO:0007669"/>
    <property type="project" value="TreeGrafter"/>
</dbReference>
<dbReference type="GO" id="GO:0020037">
    <property type="term" value="F:heme binding"/>
    <property type="evidence" value="ECO:0007669"/>
    <property type="project" value="InterPro"/>
</dbReference>
<dbReference type="GO" id="GO:0031721">
    <property type="term" value="F:hemoglobin alpha binding"/>
    <property type="evidence" value="ECO:0007669"/>
    <property type="project" value="TreeGrafter"/>
</dbReference>
<dbReference type="GO" id="GO:0046872">
    <property type="term" value="F:metal ion binding"/>
    <property type="evidence" value="ECO:0007669"/>
    <property type="project" value="UniProtKB-KW"/>
</dbReference>
<dbReference type="GO" id="GO:0043177">
    <property type="term" value="F:organic acid binding"/>
    <property type="evidence" value="ECO:0007669"/>
    <property type="project" value="TreeGrafter"/>
</dbReference>
<dbReference type="GO" id="GO:0019825">
    <property type="term" value="F:oxygen binding"/>
    <property type="evidence" value="ECO:0007669"/>
    <property type="project" value="InterPro"/>
</dbReference>
<dbReference type="GO" id="GO:0005344">
    <property type="term" value="F:oxygen carrier activity"/>
    <property type="evidence" value="ECO:0007669"/>
    <property type="project" value="UniProtKB-KW"/>
</dbReference>
<dbReference type="GO" id="GO:0004601">
    <property type="term" value="F:peroxidase activity"/>
    <property type="evidence" value="ECO:0007669"/>
    <property type="project" value="TreeGrafter"/>
</dbReference>
<dbReference type="GO" id="GO:0042744">
    <property type="term" value="P:hydrogen peroxide catabolic process"/>
    <property type="evidence" value="ECO:0007669"/>
    <property type="project" value="TreeGrafter"/>
</dbReference>
<dbReference type="CDD" id="cd08925">
    <property type="entry name" value="Hb-beta-like"/>
    <property type="match status" value="1"/>
</dbReference>
<dbReference type="FunFam" id="1.10.490.10:FF:000001">
    <property type="entry name" value="Hemoglobin subunit beta"/>
    <property type="match status" value="1"/>
</dbReference>
<dbReference type="Gene3D" id="1.10.490.10">
    <property type="entry name" value="Globins"/>
    <property type="match status" value="1"/>
</dbReference>
<dbReference type="InterPro" id="IPR000971">
    <property type="entry name" value="Globin"/>
</dbReference>
<dbReference type="InterPro" id="IPR009050">
    <property type="entry name" value="Globin-like_sf"/>
</dbReference>
<dbReference type="InterPro" id="IPR012292">
    <property type="entry name" value="Globin/Proto"/>
</dbReference>
<dbReference type="InterPro" id="IPR002337">
    <property type="entry name" value="Hemoglobin_b"/>
</dbReference>
<dbReference type="InterPro" id="IPR050056">
    <property type="entry name" value="Hemoglobin_oxygen_transport"/>
</dbReference>
<dbReference type="PANTHER" id="PTHR11442">
    <property type="entry name" value="HEMOGLOBIN FAMILY MEMBER"/>
    <property type="match status" value="1"/>
</dbReference>
<dbReference type="PANTHER" id="PTHR11442:SF42">
    <property type="entry name" value="HEMOGLOBIN SUBUNIT BETA"/>
    <property type="match status" value="1"/>
</dbReference>
<dbReference type="Pfam" id="PF00042">
    <property type="entry name" value="Globin"/>
    <property type="match status" value="1"/>
</dbReference>
<dbReference type="PRINTS" id="PR00814">
    <property type="entry name" value="BETAHAEM"/>
</dbReference>
<dbReference type="SUPFAM" id="SSF46458">
    <property type="entry name" value="Globin-like"/>
    <property type="match status" value="1"/>
</dbReference>
<dbReference type="PROSITE" id="PS01033">
    <property type="entry name" value="GLOBIN"/>
    <property type="match status" value="1"/>
</dbReference>
<organism>
    <name type="scientific">Macrotus californicus</name>
    <name type="common">Californian leaf-nosed bat</name>
    <dbReference type="NCBI Taxonomy" id="9419"/>
    <lineage>
        <taxon>Eukaryota</taxon>
        <taxon>Metazoa</taxon>
        <taxon>Chordata</taxon>
        <taxon>Craniata</taxon>
        <taxon>Vertebrata</taxon>
        <taxon>Euteleostomi</taxon>
        <taxon>Mammalia</taxon>
        <taxon>Eutheria</taxon>
        <taxon>Laurasiatheria</taxon>
        <taxon>Chiroptera</taxon>
        <taxon>Yangochiroptera</taxon>
        <taxon>Phyllostomidae</taxon>
        <taxon>Phyllostominae</taxon>
        <taxon>Macrotus</taxon>
    </lineage>
</organism>
<keyword id="KW-0007">Acetylation</keyword>
<keyword id="KW-0903">Direct protein sequencing</keyword>
<keyword id="KW-0349">Heme</keyword>
<keyword id="KW-0408">Iron</keyword>
<keyword id="KW-0479">Metal-binding</keyword>
<keyword id="KW-0561">Oxygen transport</keyword>
<keyword id="KW-0597">Phosphoprotein</keyword>
<keyword id="KW-0702">S-nitrosylation</keyword>
<keyword id="KW-0813">Transport</keyword>
<evidence type="ECO:0000250" key="1">
    <source>
        <dbReference type="UniProtKB" id="P02086"/>
    </source>
</evidence>
<evidence type="ECO:0000250" key="2">
    <source>
        <dbReference type="UniProtKB" id="P68871"/>
    </source>
</evidence>
<evidence type="ECO:0000255" key="3">
    <source>
        <dbReference type="PROSITE-ProRule" id="PRU00238"/>
    </source>
</evidence>
<protein>
    <recommendedName>
        <fullName>Hemoglobin subunit beta</fullName>
    </recommendedName>
    <alternativeName>
        <fullName>Beta-globin</fullName>
    </alternativeName>
    <alternativeName>
        <fullName>Hemoglobin beta chain</fullName>
    </alternativeName>
</protein>
<reference key="1">
    <citation type="journal article" date="1987" name="Biol. Chem. Hoppe-Seyler">
        <title>The primary structure of the hemoglobin from the bat Macrotus californicus (Chiroptera).</title>
        <authorList>
            <person name="Soskic V."/>
            <person name="Kleinschmidt T."/>
            <person name="Braunitzer G."/>
        </authorList>
    </citation>
    <scope>PROTEIN SEQUENCE</scope>
</reference>
<name>HBB_MACCA</name>
<accession>P09840</accession>
<comment type="function">
    <text>Involved in oxygen transport from the lung to the various peripheral tissues.</text>
</comment>
<comment type="subunit">
    <text>Heterotetramer of two alpha chains and two beta chains.</text>
</comment>
<comment type="tissue specificity">
    <text>Red blood cells.</text>
</comment>
<comment type="similarity">
    <text evidence="3">Belongs to the globin family.</text>
</comment>
<gene>
    <name type="primary">HBB</name>
</gene>